<sequence length="185" mass="20371">MSEEELTNGPGPEPQPEPLEVESAPLEAAPAGEPDKALLEAQQQASENWDRFVRAQAEMENLRRRLEKDIQNAHKYALEKFAKELLPVMDSLELGIAASTGDAPDVAKLREGAELTLKQFKSVFEKFGIAVVDPLGEKFNPEQHQAMAMEPAGEAEPNTVVKVFQKGYLLNDRLLRPALVVVAQA</sequence>
<proteinExistence type="inferred from homology"/>
<organism>
    <name type="scientific">Methylococcus capsulatus (strain ATCC 33009 / NCIMB 11132 / Bath)</name>
    <dbReference type="NCBI Taxonomy" id="243233"/>
    <lineage>
        <taxon>Bacteria</taxon>
        <taxon>Pseudomonadati</taxon>
        <taxon>Pseudomonadota</taxon>
        <taxon>Gammaproteobacteria</taxon>
        <taxon>Methylococcales</taxon>
        <taxon>Methylococcaceae</taxon>
        <taxon>Methylococcus</taxon>
    </lineage>
</organism>
<feature type="chain" id="PRO_1000164201" description="Protein GrpE">
    <location>
        <begin position="1"/>
        <end position="185"/>
    </location>
</feature>
<feature type="region of interest" description="Disordered" evidence="2">
    <location>
        <begin position="1"/>
        <end position="44"/>
    </location>
</feature>
<gene>
    <name evidence="1" type="primary">grpE</name>
    <name type="ordered locus">MCA1857</name>
</gene>
<reference key="1">
    <citation type="journal article" date="2004" name="PLoS Biol.">
        <title>Genomic insights into methanotrophy: the complete genome sequence of Methylococcus capsulatus (Bath).</title>
        <authorList>
            <person name="Ward N.L."/>
            <person name="Larsen O."/>
            <person name="Sakwa J."/>
            <person name="Bruseth L."/>
            <person name="Khouri H.M."/>
            <person name="Durkin A.S."/>
            <person name="Dimitrov G."/>
            <person name="Jiang L."/>
            <person name="Scanlan D."/>
            <person name="Kang K.H."/>
            <person name="Lewis M.R."/>
            <person name="Nelson K.E."/>
            <person name="Methe B.A."/>
            <person name="Wu M."/>
            <person name="Heidelberg J.F."/>
            <person name="Paulsen I.T."/>
            <person name="Fouts D.E."/>
            <person name="Ravel J."/>
            <person name="Tettelin H."/>
            <person name="Ren Q."/>
            <person name="Read T.D."/>
            <person name="DeBoy R.T."/>
            <person name="Seshadri R."/>
            <person name="Salzberg S.L."/>
            <person name="Jensen H.B."/>
            <person name="Birkeland N.K."/>
            <person name="Nelson W.C."/>
            <person name="Dodson R.J."/>
            <person name="Grindhaug S.H."/>
            <person name="Holt I.E."/>
            <person name="Eidhammer I."/>
            <person name="Jonasen I."/>
            <person name="Vanaken S."/>
            <person name="Utterback T.R."/>
            <person name="Feldblyum T.V."/>
            <person name="Fraser C.M."/>
            <person name="Lillehaug J.R."/>
            <person name="Eisen J.A."/>
        </authorList>
    </citation>
    <scope>NUCLEOTIDE SEQUENCE [LARGE SCALE GENOMIC DNA]</scope>
    <source>
        <strain>ATCC 33009 / NCIMB 11132 / Bath</strain>
    </source>
</reference>
<dbReference type="EMBL" id="AE017282">
    <property type="protein sequence ID" value="AAU91906.1"/>
    <property type="molecule type" value="Genomic_DNA"/>
</dbReference>
<dbReference type="RefSeq" id="WP_010961109.1">
    <property type="nucleotide sequence ID" value="NC_002977.6"/>
</dbReference>
<dbReference type="SMR" id="Q607A4"/>
<dbReference type="STRING" id="243233.MCA1857"/>
<dbReference type="GeneID" id="88224102"/>
<dbReference type="KEGG" id="mca:MCA1857"/>
<dbReference type="eggNOG" id="COG0576">
    <property type="taxonomic scope" value="Bacteria"/>
</dbReference>
<dbReference type="HOGENOM" id="CLU_057217_6_0_6"/>
<dbReference type="Proteomes" id="UP000006821">
    <property type="component" value="Chromosome"/>
</dbReference>
<dbReference type="GO" id="GO:0005829">
    <property type="term" value="C:cytosol"/>
    <property type="evidence" value="ECO:0007669"/>
    <property type="project" value="TreeGrafter"/>
</dbReference>
<dbReference type="GO" id="GO:0000774">
    <property type="term" value="F:adenyl-nucleotide exchange factor activity"/>
    <property type="evidence" value="ECO:0007669"/>
    <property type="project" value="InterPro"/>
</dbReference>
<dbReference type="GO" id="GO:0042803">
    <property type="term" value="F:protein homodimerization activity"/>
    <property type="evidence" value="ECO:0007669"/>
    <property type="project" value="InterPro"/>
</dbReference>
<dbReference type="GO" id="GO:0051087">
    <property type="term" value="F:protein-folding chaperone binding"/>
    <property type="evidence" value="ECO:0007669"/>
    <property type="project" value="InterPro"/>
</dbReference>
<dbReference type="GO" id="GO:0051082">
    <property type="term" value="F:unfolded protein binding"/>
    <property type="evidence" value="ECO:0007669"/>
    <property type="project" value="TreeGrafter"/>
</dbReference>
<dbReference type="GO" id="GO:0006457">
    <property type="term" value="P:protein folding"/>
    <property type="evidence" value="ECO:0007669"/>
    <property type="project" value="InterPro"/>
</dbReference>
<dbReference type="CDD" id="cd00446">
    <property type="entry name" value="GrpE"/>
    <property type="match status" value="1"/>
</dbReference>
<dbReference type="FunFam" id="2.30.22.10:FF:000001">
    <property type="entry name" value="Protein GrpE"/>
    <property type="match status" value="1"/>
</dbReference>
<dbReference type="Gene3D" id="3.90.20.20">
    <property type="match status" value="1"/>
</dbReference>
<dbReference type="Gene3D" id="2.30.22.10">
    <property type="entry name" value="Head domain of nucleotide exchange factor GrpE"/>
    <property type="match status" value="1"/>
</dbReference>
<dbReference type="HAMAP" id="MF_01151">
    <property type="entry name" value="GrpE"/>
    <property type="match status" value="1"/>
</dbReference>
<dbReference type="InterPro" id="IPR000740">
    <property type="entry name" value="GrpE"/>
</dbReference>
<dbReference type="InterPro" id="IPR013805">
    <property type="entry name" value="GrpE_coiled_coil"/>
</dbReference>
<dbReference type="InterPro" id="IPR009012">
    <property type="entry name" value="GrpE_head"/>
</dbReference>
<dbReference type="NCBIfam" id="NF010737">
    <property type="entry name" value="PRK14139.1"/>
    <property type="match status" value="1"/>
</dbReference>
<dbReference type="NCBIfam" id="NF010738">
    <property type="entry name" value="PRK14140.1"/>
    <property type="match status" value="1"/>
</dbReference>
<dbReference type="NCBIfam" id="NF010748">
    <property type="entry name" value="PRK14150.1"/>
    <property type="match status" value="1"/>
</dbReference>
<dbReference type="PANTHER" id="PTHR21237">
    <property type="entry name" value="GRPE PROTEIN"/>
    <property type="match status" value="1"/>
</dbReference>
<dbReference type="PANTHER" id="PTHR21237:SF23">
    <property type="entry name" value="GRPE PROTEIN HOMOLOG, MITOCHONDRIAL"/>
    <property type="match status" value="1"/>
</dbReference>
<dbReference type="Pfam" id="PF01025">
    <property type="entry name" value="GrpE"/>
    <property type="match status" value="1"/>
</dbReference>
<dbReference type="PRINTS" id="PR00773">
    <property type="entry name" value="GRPEPROTEIN"/>
</dbReference>
<dbReference type="SUPFAM" id="SSF58014">
    <property type="entry name" value="Coiled-coil domain of nucleotide exchange factor GrpE"/>
    <property type="match status" value="1"/>
</dbReference>
<dbReference type="SUPFAM" id="SSF51064">
    <property type="entry name" value="Head domain of nucleotide exchange factor GrpE"/>
    <property type="match status" value="1"/>
</dbReference>
<dbReference type="PROSITE" id="PS01071">
    <property type="entry name" value="GRPE"/>
    <property type="match status" value="1"/>
</dbReference>
<evidence type="ECO:0000255" key="1">
    <source>
        <dbReference type="HAMAP-Rule" id="MF_01151"/>
    </source>
</evidence>
<evidence type="ECO:0000256" key="2">
    <source>
        <dbReference type="SAM" id="MobiDB-lite"/>
    </source>
</evidence>
<accession>Q607A4</accession>
<protein>
    <recommendedName>
        <fullName evidence="1">Protein GrpE</fullName>
    </recommendedName>
    <alternativeName>
        <fullName evidence="1">HSP-70 cofactor</fullName>
    </alternativeName>
</protein>
<name>GRPE_METCA</name>
<keyword id="KW-0143">Chaperone</keyword>
<keyword id="KW-0963">Cytoplasm</keyword>
<keyword id="KW-1185">Reference proteome</keyword>
<keyword id="KW-0346">Stress response</keyword>
<comment type="function">
    <text evidence="1">Participates actively in the response to hyperosmotic and heat shock by preventing the aggregation of stress-denatured proteins, in association with DnaK and GrpE. It is the nucleotide exchange factor for DnaK and may function as a thermosensor. Unfolded proteins bind initially to DnaJ; upon interaction with the DnaJ-bound protein, DnaK hydrolyzes its bound ATP, resulting in the formation of a stable complex. GrpE releases ADP from DnaK; ATP binding to DnaK triggers the release of the substrate protein, thus completing the reaction cycle. Several rounds of ATP-dependent interactions between DnaJ, DnaK and GrpE are required for fully efficient folding.</text>
</comment>
<comment type="subunit">
    <text evidence="1">Homodimer.</text>
</comment>
<comment type="subcellular location">
    <subcellularLocation>
        <location evidence="1">Cytoplasm</location>
    </subcellularLocation>
</comment>
<comment type="similarity">
    <text evidence="1">Belongs to the GrpE family.</text>
</comment>